<sequence>MSTIEERVKKIIGEQLGVKQEEVTNNASFVEDLGADSLDTVELVMALEEEFDTEIPDEEAEKITTVQAAIDYINGHQA</sequence>
<organism>
    <name type="scientific">Escherichia coli (strain UTI89 / UPEC)</name>
    <dbReference type="NCBI Taxonomy" id="364106"/>
    <lineage>
        <taxon>Bacteria</taxon>
        <taxon>Pseudomonadati</taxon>
        <taxon>Pseudomonadota</taxon>
        <taxon>Gammaproteobacteria</taxon>
        <taxon>Enterobacterales</taxon>
        <taxon>Enterobacteriaceae</taxon>
        <taxon>Escherichia</taxon>
    </lineage>
</organism>
<accession>Q1RD62</accession>
<proteinExistence type="inferred from homology"/>
<dbReference type="EMBL" id="CP000243">
    <property type="protein sequence ID" value="ABE06702.1"/>
    <property type="molecule type" value="Genomic_DNA"/>
</dbReference>
<dbReference type="RefSeq" id="WP_000103754.1">
    <property type="nucleotide sequence ID" value="NZ_CP064825.1"/>
</dbReference>
<dbReference type="SMR" id="Q1RD62"/>
<dbReference type="GeneID" id="98387866"/>
<dbReference type="KEGG" id="eci:UTI89_C1220"/>
<dbReference type="HOGENOM" id="CLU_108696_5_1_6"/>
<dbReference type="UniPathway" id="UPA00094"/>
<dbReference type="Proteomes" id="UP000001952">
    <property type="component" value="Chromosome"/>
</dbReference>
<dbReference type="GO" id="GO:0005829">
    <property type="term" value="C:cytosol"/>
    <property type="evidence" value="ECO:0007669"/>
    <property type="project" value="TreeGrafter"/>
</dbReference>
<dbReference type="GO" id="GO:0016020">
    <property type="term" value="C:membrane"/>
    <property type="evidence" value="ECO:0007669"/>
    <property type="project" value="GOC"/>
</dbReference>
<dbReference type="GO" id="GO:0000035">
    <property type="term" value="F:acyl binding"/>
    <property type="evidence" value="ECO:0007669"/>
    <property type="project" value="TreeGrafter"/>
</dbReference>
<dbReference type="GO" id="GO:0000036">
    <property type="term" value="F:acyl carrier activity"/>
    <property type="evidence" value="ECO:0007669"/>
    <property type="project" value="UniProtKB-UniRule"/>
</dbReference>
<dbReference type="GO" id="GO:0009245">
    <property type="term" value="P:lipid A biosynthetic process"/>
    <property type="evidence" value="ECO:0007669"/>
    <property type="project" value="TreeGrafter"/>
</dbReference>
<dbReference type="FunFam" id="1.10.1200.10:FF:000001">
    <property type="entry name" value="Acyl carrier protein"/>
    <property type="match status" value="1"/>
</dbReference>
<dbReference type="Gene3D" id="1.10.1200.10">
    <property type="entry name" value="ACP-like"/>
    <property type="match status" value="1"/>
</dbReference>
<dbReference type="HAMAP" id="MF_01217">
    <property type="entry name" value="Acyl_carrier"/>
    <property type="match status" value="1"/>
</dbReference>
<dbReference type="InterPro" id="IPR003231">
    <property type="entry name" value="ACP"/>
</dbReference>
<dbReference type="InterPro" id="IPR036736">
    <property type="entry name" value="ACP-like_sf"/>
</dbReference>
<dbReference type="InterPro" id="IPR009081">
    <property type="entry name" value="PP-bd_ACP"/>
</dbReference>
<dbReference type="InterPro" id="IPR006162">
    <property type="entry name" value="Ppantetheine_attach_site"/>
</dbReference>
<dbReference type="NCBIfam" id="TIGR00517">
    <property type="entry name" value="acyl_carrier"/>
    <property type="match status" value="1"/>
</dbReference>
<dbReference type="NCBIfam" id="NF002148">
    <property type="entry name" value="PRK00982.1-2"/>
    <property type="match status" value="1"/>
</dbReference>
<dbReference type="NCBIfam" id="NF002149">
    <property type="entry name" value="PRK00982.1-3"/>
    <property type="match status" value="1"/>
</dbReference>
<dbReference type="NCBIfam" id="NF002150">
    <property type="entry name" value="PRK00982.1-4"/>
    <property type="match status" value="1"/>
</dbReference>
<dbReference type="NCBIfam" id="NF002151">
    <property type="entry name" value="PRK00982.1-5"/>
    <property type="match status" value="1"/>
</dbReference>
<dbReference type="PANTHER" id="PTHR20863">
    <property type="entry name" value="ACYL CARRIER PROTEIN"/>
    <property type="match status" value="1"/>
</dbReference>
<dbReference type="PANTHER" id="PTHR20863:SF76">
    <property type="entry name" value="CARRIER DOMAIN-CONTAINING PROTEIN"/>
    <property type="match status" value="1"/>
</dbReference>
<dbReference type="Pfam" id="PF00550">
    <property type="entry name" value="PP-binding"/>
    <property type="match status" value="1"/>
</dbReference>
<dbReference type="SUPFAM" id="SSF47336">
    <property type="entry name" value="ACP-like"/>
    <property type="match status" value="1"/>
</dbReference>
<dbReference type="PROSITE" id="PS50075">
    <property type="entry name" value="CARRIER"/>
    <property type="match status" value="1"/>
</dbReference>
<dbReference type="PROSITE" id="PS00012">
    <property type="entry name" value="PHOSPHOPANTETHEINE"/>
    <property type="match status" value="1"/>
</dbReference>
<evidence type="ECO:0000255" key="1">
    <source>
        <dbReference type="HAMAP-Rule" id="MF_01217"/>
    </source>
</evidence>
<evidence type="ECO:0000255" key="2">
    <source>
        <dbReference type="PROSITE-ProRule" id="PRU00258"/>
    </source>
</evidence>
<reference key="1">
    <citation type="journal article" date="2006" name="Proc. Natl. Acad. Sci. U.S.A.">
        <title>Identification of genes subject to positive selection in uropathogenic strains of Escherichia coli: a comparative genomics approach.</title>
        <authorList>
            <person name="Chen S.L."/>
            <person name="Hung C.-S."/>
            <person name="Xu J."/>
            <person name="Reigstad C.S."/>
            <person name="Magrini V."/>
            <person name="Sabo A."/>
            <person name="Blasiar D."/>
            <person name="Bieri T."/>
            <person name="Meyer R.R."/>
            <person name="Ozersky P."/>
            <person name="Armstrong J.R."/>
            <person name="Fulton R.S."/>
            <person name="Latreille J.P."/>
            <person name="Spieth J."/>
            <person name="Hooton T.M."/>
            <person name="Mardis E.R."/>
            <person name="Hultgren S.J."/>
            <person name="Gordon J.I."/>
        </authorList>
    </citation>
    <scope>NUCLEOTIDE SEQUENCE [LARGE SCALE GENOMIC DNA]</scope>
    <source>
        <strain>UTI89 / UPEC</strain>
    </source>
</reference>
<comment type="function">
    <text evidence="1">Carrier of the growing fatty acid chain in fatty acid biosynthesis.</text>
</comment>
<comment type="pathway">
    <text evidence="1">Lipid metabolism; fatty acid biosynthesis.</text>
</comment>
<comment type="subcellular location">
    <subcellularLocation>
        <location evidence="1">Cytoplasm</location>
    </subcellularLocation>
</comment>
<comment type="PTM">
    <text evidence="1">4'-phosphopantetheine is transferred from CoA to a specific serine of apo-ACP by AcpS. This modification is essential for activity because fatty acids are bound in thioester linkage to the sulfhydryl of the prosthetic group.</text>
</comment>
<comment type="similarity">
    <text evidence="1">Belongs to the acyl carrier protein (ACP) family.</text>
</comment>
<protein>
    <recommendedName>
        <fullName evidence="1">Acyl carrier protein</fullName>
        <shortName evidence="1">ACP</shortName>
    </recommendedName>
</protein>
<keyword id="KW-0963">Cytoplasm</keyword>
<keyword id="KW-0275">Fatty acid biosynthesis</keyword>
<keyword id="KW-0276">Fatty acid metabolism</keyword>
<keyword id="KW-0444">Lipid biosynthesis</keyword>
<keyword id="KW-0443">Lipid metabolism</keyword>
<keyword id="KW-0596">Phosphopantetheine</keyword>
<keyword id="KW-0597">Phosphoprotein</keyword>
<name>ACP_ECOUT</name>
<gene>
    <name evidence="1" type="primary">acpP</name>
    <name type="ordered locus">UTI89_C1220</name>
</gene>
<feature type="chain" id="PRO_1000066608" description="Acyl carrier protein">
    <location>
        <begin position="1"/>
        <end position="78"/>
    </location>
</feature>
<feature type="domain" description="Carrier" evidence="2">
    <location>
        <begin position="2"/>
        <end position="77"/>
    </location>
</feature>
<feature type="modified residue" description="O-(pantetheine 4'-phosphoryl)serine" evidence="2">
    <location>
        <position position="37"/>
    </location>
</feature>